<sequence>MSVRESFNPESYELDKSFRLTRFAELKGTGCKVPQDVLQKLLESLQENHFQEDEQFLGAVMPRLGIGMDTCVIPLRHGGLSLVQTTDYIYPIVDDPYMMGRIACANVLSDLYAMGVTECDNMLMLLGVSNKLTDRERDKVMPLIIQGFKDAAEEAGTSVTGGQTVLNPWVVLGGVATTVCQPNEFIMPDNAVPGDVLVLTKPLGTQVAVAVHQWLDIPEKWNKIKLVVTQEDVELAYQEAMMNMARLNRTAAGLMHTFNAHAATDITGFGILGHAQNLAKQQRNEVSFVIHNLPVLAKMAAVSKACGNMFGLMHGSCPETSGGLLICLPREQAARFCAEIKSPKYGEGHQAWIIGIVEKGNRTARIIDKPRIIEVAPQVASQNVNPTPGATS</sequence>
<comment type="function">
    <text evidence="2">Synthesizes selenophosphate from selenide and ATP.</text>
</comment>
<comment type="catalytic activity">
    <reaction evidence="2">
        <text>hydrogenselenide + ATP + H2O = selenophosphate + AMP + phosphate + 2 H(+)</text>
        <dbReference type="Rhea" id="RHEA:18737"/>
        <dbReference type="ChEBI" id="CHEBI:15377"/>
        <dbReference type="ChEBI" id="CHEBI:15378"/>
        <dbReference type="ChEBI" id="CHEBI:16144"/>
        <dbReference type="ChEBI" id="CHEBI:29317"/>
        <dbReference type="ChEBI" id="CHEBI:30616"/>
        <dbReference type="ChEBI" id="CHEBI:43474"/>
        <dbReference type="ChEBI" id="CHEBI:456215"/>
        <dbReference type="EC" id="2.7.9.3"/>
    </reaction>
</comment>
<comment type="cofactor">
    <cofactor evidence="2">
        <name>Mg(2+)</name>
        <dbReference type="ChEBI" id="CHEBI:18420"/>
    </cofactor>
    <text evidence="2">Binds 1 Mg(2+) ion per monomer.</text>
</comment>
<comment type="subunit">
    <text evidence="2">Homodimer.</text>
</comment>
<comment type="subcellular location">
    <subcellularLocation>
        <location evidence="2">Cell membrane</location>
        <topology evidence="4">Peripheral membrane protein</topology>
    </subcellularLocation>
    <subcellularLocation>
        <location evidence="2">Nucleus membrane</location>
        <topology evidence="4">Peripheral membrane protein</topology>
    </subcellularLocation>
</comment>
<comment type="similarity">
    <text evidence="4">Belongs to the selenophosphate synthase 1 family. Class II subfamily.</text>
</comment>
<comment type="caution">
    <text evidence="4">The conserved active site Cys (or selenocysteine) residue in position 29 is replaced by a Thr. However, as function in selenoprotein synthesis is probable, it is possible Cys-31 is the active site.</text>
</comment>
<organism>
    <name type="scientific">Xenopus tropicalis</name>
    <name type="common">Western clawed frog</name>
    <name type="synonym">Silurana tropicalis</name>
    <dbReference type="NCBI Taxonomy" id="8364"/>
    <lineage>
        <taxon>Eukaryota</taxon>
        <taxon>Metazoa</taxon>
        <taxon>Chordata</taxon>
        <taxon>Craniata</taxon>
        <taxon>Vertebrata</taxon>
        <taxon>Euteleostomi</taxon>
        <taxon>Amphibia</taxon>
        <taxon>Batrachia</taxon>
        <taxon>Anura</taxon>
        <taxon>Pipoidea</taxon>
        <taxon>Pipidae</taxon>
        <taxon>Xenopodinae</taxon>
        <taxon>Xenopus</taxon>
        <taxon>Silurana</taxon>
    </lineage>
</organism>
<reference key="1">
    <citation type="submission" date="2004-06" db="EMBL/GenBank/DDBJ databases">
        <authorList>
            <consortium name="NIH - Xenopus Gene Collection (XGC) project"/>
        </authorList>
    </citation>
    <scope>NUCLEOTIDE SEQUENCE [LARGE SCALE MRNA]</scope>
    <source>
        <tissue>Embryo</tissue>
    </source>
</reference>
<keyword id="KW-0067">ATP-binding</keyword>
<keyword id="KW-1003">Cell membrane</keyword>
<keyword id="KW-0418">Kinase</keyword>
<keyword id="KW-0460">Magnesium</keyword>
<keyword id="KW-0472">Membrane</keyword>
<keyword id="KW-0479">Metal-binding</keyword>
<keyword id="KW-0547">Nucleotide-binding</keyword>
<keyword id="KW-0539">Nucleus</keyword>
<keyword id="KW-1185">Reference proteome</keyword>
<keyword id="KW-0711">Selenium</keyword>
<keyword id="KW-0808">Transferase</keyword>
<protein>
    <recommendedName>
        <fullName>Selenide, water dikinase 1</fullName>
        <ecNumber evidence="2">2.7.9.3</ecNumber>
    </recommendedName>
    <alternativeName>
        <fullName>Selenium donor protein 1</fullName>
    </alternativeName>
    <alternativeName>
        <fullName>Selenophosphate synthase 1</fullName>
    </alternativeName>
</protein>
<name>SPS1_XENTR</name>
<proteinExistence type="evidence at transcript level"/>
<accession>Q6GL12</accession>
<gene>
    <name type="primary">sephs1</name>
</gene>
<feature type="chain" id="PRO_0000312510" description="Selenide, water dikinase 1">
    <location>
        <begin position="1"/>
        <end position="392"/>
    </location>
</feature>
<feature type="active site" evidence="3">
    <location>
        <position position="31"/>
    </location>
</feature>
<feature type="binding site" description="in other chain" evidence="2">
    <location>
        <position position="32"/>
    </location>
    <ligand>
        <name>ATP</name>
        <dbReference type="ChEBI" id="CHEBI:30616"/>
        <note>ligand shared between dimeric partners</note>
    </ligand>
</feature>
<feature type="binding site" description="in other chain" evidence="2">
    <location>
        <begin position="67"/>
        <end position="69"/>
    </location>
    <ligand>
        <name>ATP</name>
        <dbReference type="ChEBI" id="CHEBI:30616"/>
        <note>ligand shared between dimeric partners</note>
    </ligand>
</feature>
<feature type="binding site" evidence="2">
    <location>
        <position position="69"/>
    </location>
    <ligand>
        <name>Mg(2+)</name>
        <dbReference type="ChEBI" id="CHEBI:18420"/>
    </ligand>
</feature>
<feature type="binding site" description="in other chain" evidence="2">
    <location>
        <position position="87"/>
    </location>
    <ligand>
        <name>ATP</name>
        <dbReference type="ChEBI" id="CHEBI:30616"/>
        <note>ligand shared between dimeric partners</note>
    </ligand>
</feature>
<feature type="binding site" description="in other chain" evidence="2">
    <location>
        <position position="110"/>
    </location>
    <ligand>
        <name>ATP</name>
        <dbReference type="ChEBI" id="CHEBI:30616"/>
        <note>ligand shared between dimeric partners</note>
    </ligand>
</feature>
<feature type="binding site" evidence="2">
    <location>
        <position position="110"/>
    </location>
    <ligand>
        <name>Mg(2+)</name>
        <dbReference type="ChEBI" id="CHEBI:18420"/>
    </ligand>
</feature>
<feature type="binding site" evidence="2">
    <location>
        <begin position="161"/>
        <end position="164"/>
    </location>
    <ligand>
        <name>ATP</name>
        <dbReference type="ChEBI" id="CHEBI:30616"/>
        <note>ligand shared between dimeric partners</note>
    </ligand>
</feature>
<feature type="binding site" evidence="2">
    <location>
        <position position="265"/>
    </location>
    <ligand>
        <name>Mg(2+)</name>
        <dbReference type="ChEBI" id="CHEBI:18420"/>
    </ligand>
</feature>
<feature type="site" description="Important for catalytic activity" evidence="1">
    <location>
        <position position="32"/>
    </location>
</feature>
<evidence type="ECO:0000250" key="1">
    <source>
        <dbReference type="UniProtKB" id="P16456"/>
    </source>
</evidence>
<evidence type="ECO:0000250" key="2">
    <source>
        <dbReference type="UniProtKB" id="P49903"/>
    </source>
</evidence>
<evidence type="ECO:0000255" key="3"/>
<evidence type="ECO:0000305" key="4"/>
<dbReference type="EC" id="2.7.9.3" evidence="2"/>
<dbReference type="EMBL" id="BC074707">
    <property type="protein sequence ID" value="AAH74707.1"/>
    <property type="molecule type" value="mRNA"/>
</dbReference>
<dbReference type="RefSeq" id="NP_001006902.1">
    <property type="nucleotide sequence ID" value="NM_001006901.1"/>
</dbReference>
<dbReference type="RefSeq" id="XP_012814310.1">
    <property type="nucleotide sequence ID" value="XM_012958856.3"/>
</dbReference>
<dbReference type="RefSeq" id="XP_012814311.1">
    <property type="nucleotide sequence ID" value="XM_012958857.3"/>
</dbReference>
<dbReference type="RefSeq" id="XP_012814312.1">
    <property type="nucleotide sequence ID" value="XM_012958858.3"/>
</dbReference>
<dbReference type="SMR" id="Q6GL12"/>
<dbReference type="FunCoup" id="Q6GL12">
    <property type="interactions" value="1487"/>
</dbReference>
<dbReference type="STRING" id="8364.ENSXETP00000023672"/>
<dbReference type="PaxDb" id="8364-ENSXETP00000059106"/>
<dbReference type="DNASU" id="448749"/>
<dbReference type="GeneID" id="448749"/>
<dbReference type="KEGG" id="xtr:448749"/>
<dbReference type="AGR" id="Xenbase:XB-GENE-986440"/>
<dbReference type="CTD" id="22929"/>
<dbReference type="Xenbase" id="XB-GENE-986440">
    <property type="gene designation" value="sephs1"/>
</dbReference>
<dbReference type="eggNOG" id="KOG3939">
    <property type="taxonomic scope" value="Eukaryota"/>
</dbReference>
<dbReference type="InParanoid" id="Q6GL12"/>
<dbReference type="OMA" id="LARDWMC"/>
<dbReference type="OrthoDB" id="409395at2759"/>
<dbReference type="Proteomes" id="UP000008143">
    <property type="component" value="Chromosome 3"/>
</dbReference>
<dbReference type="Bgee" id="ENSXETG00000009116">
    <property type="expression patterns" value="Expressed in skeletal muscle tissue and 14 other cell types or tissues"/>
</dbReference>
<dbReference type="GO" id="GO:0031965">
    <property type="term" value="C:nuclear membrane"/>
    <property type="evidence" value="ECO:0000250"/>
    <property type="project" value="UniProtKB"/>
</dbReference>
<dbReference type="GO" id="GO:0005886">
    <property type="term" value="C:plasma membrane"/>
    <property type="evidence" value="ECO:0000250"/>
    <property type="project" value="UniProtKB"/>
</dbReference>
<dbReference type="GO" id="GO:0005524">
    <property type="term" value="F:ATP binding"/>
    <property type="evidence" value="ECO:0007669"/>
    <property type="project" value="UniProtKB-KW"/>
</dbReference>
<dbReference type="GO" id="GO:0046872">
    <property type="term" value="F:metal ion binding"/>
    <property type="evidence" value="ECO:0007669"/>
    <property type="project" value="UniProtKB-KW"/>
</dbReference>
<dbReference type="GO" id="GO:0046982">
    <property type="term" value="F:protein heterodimerization activity"/>
    <property type="evidence" value="ECO:0000250"/>
    <property type="project" value="UniProtKB"/>
</dbReference>
<dbReference type="GO" id="GO:0042803">
    <property type="term" value="F:protein homodimerization activity"/>
    <property type="evidence" value="ECO:0000250"/>
    <property type="project" value="UniProtKB"/>
</dbReference>
<dbReference type="GO" id="GO:0004756">
    <property type="term" value="F:selenide, water dikinase activity"/>
    <property type="evidence" value="ECO:0007669"/>
    <property type="project" value="UniProtKB-EC"/>
</dbReference>
<dbReference type="CDD" id="cd02195">
    <property type="entry name" value="SelD"/>
    <property type="match status" value="1"/>
</dbReference>
<dbReference type="FunFam" id="3.30.1330.10:FF:000006">
    <property type="entry name" value="Selenide water dikinase 1"/>
    <property type="match status" value="1"/>
</dbReference>
<dbReference type="FunFam" id="3.90.650.10:FF:000003">
    <property type="entry name" value="Selenide, water dikinase 1"/>
    <property type="match status" value="1"/>
</dbReference>
<dbReference type="Gene3D" id="3.90.650.10">
    <property type="entry name" value="PurM-like C-terminal domain"/>
    <property type="match status" value="1"/>
</dbReference>
<dbReference type="Gene3D" id="3.30.1330.10">
    <property type="entry name" value="PurM-like, N-terminal domain"/>
    <property type="match status" value="1"/>
</dbReference>
<dbReference type="InterPro" id="IPR010918">
    <property type="entry name" value="PurM-like_C_dom"/>
</dbReference>
<dbReference type="InterPro" id="IPR036676">
    <property type="entry name" value="PurM-like_C_sf"/>
</dbReference>
<dbReference type="InterPro" id="IPR016188">
    <property type="entry name" value="PurM-like_N"/>
</dbReference>
<dbReference type="InterPro" id="IPR036921">
    <property type="entry name" value="PurM-like_N_sf"/>
</dbReference>
<dbReference type="InterPro" id="IPR004536">
    <property type="entry name" value="SPS/SelD"/>
</dbReference>
<dbReference type="NCBIfam" id="TIGR00476">
    <property type="entry name" value="selD"/>
    <property type="match status" value="1"/>
</dbReference>
<dbReference type="PANTHER" id="PTHR10256">
    <property type="entry name" value="SELENIDE, WATER DIKINASE"/>
    <property type="match status" value="1"/>
</dbReference>
<dbReference type="PANTHER" id="PTHR10256:SF2">
    <property type="entry name" value="SELENIDE, WATER DIKINASE 1"/>
    <property type="match status" value="1"/>
</dbReference>
<dbReference type="Pfam" id="PF00586">
    <property type="entry name" value="AIRS"/>
    <property type="match status" value="1"/>
</dbReference>
<dbReference type="Pfam" id="PF02769">
    <property type="entry name" value="AIRS_C"/>
    <property type="match status" value="1"/>
</dbReference>
<dbReference type="PIRSF" id="PIRSF036407">
    <property type="entry name" value="Selenphspht_syn"/>
    <property type="match status" value="1"/>
</dbReference>
<dbReference type="SUPFAM" id="SSF56042">
    <property type="entry name" value="PurM C-terminal domain-like"/>
    <property type="match status" value="1"/>
</dbReference>
<dbReference type="SUPFAM" id="SSF55326">
    <property type="entry name" value="PurM N-terminal domain-like"/>
    <property type="match status" value="1"/>
</dbReference>